<reference key="1">
    <citation type="submission" date="2005-05" db="EMBL/GenBank/DDBJ databases">
        <authorList>
            <consortium name="NIH - Zebrafish Gene Collection (ZGC) project"/>
        </authorList>
    </citation>
    <scope>NUCLEOTIDE SEQUENCE [LARGE SCALE MRNA]</scope>
    <source>
        <tissue>Ovary</tissue>
    </source>
</reference>
<gene>
    <name type="primary">ankrd52</name>
    <name type="ORF">zgc:112069</name>
</gene>
<accession>Q502K3</accession>
<keyword id="KW-0040">ANK repeat</keyword>
<keyword id="KW-1185">Reference proteome</keyword>
<keyword id="KW-0677">Repeat</keyword>
<name>ANR52_DANRE</name>
<feature type="chain" id="PRO_0000244590" description="Serine/threonine-protein phosphatase 6 regulatory ankyrin repeat subunit C">
    <location>
        <begin position="1"/>
        <end position="1071"/>
    </location>
</feature>
<feature type="repeat" description="ANK 1">
    <location>
        <begin position="7"/>
        <end position="36"/>
    </location>
</feature>
<feature type="repeat" description="ANK 2">
    <location>
        <begin position="40"/>
        <end position="69"/>
    </location>
</feature>
<feature type="repeat" description="ANK 3">
    <location>
        <begin position="73"/>
        <end position="102"/>
    </location>
</feature>
<feature type="repeat" description="ANK 4">
    <location>
        <begin position="106"/>
        <end position="135"/>
    </location>
</feature>
<feature type="repeat" description="ANK 5">
    <location>
        <begin position="139"/>
        <end position="168"/>
    </location>
</feature>
<feature type="repeat" description="ANK 6">
    <location>
        <begin position="172"/>
        <end position="201"/>
    </location>
</feature>
<feature type="repeat" description="ANK 7">
    <location>
        <begin position="205"/>
        <end position="234"/>
    </location>
</feature>
<feature type="repeat" description="ANK 8">
    <location>
        <begin position="238"/>
        <end position="267"/>
    </location>
</feature>
<feature type="repeat" description="ANK 9">
    <location>
        <begin position="271"/>
        <end position="301"/>
    </location>
</feature>
<feature type="repeat" description="ANK 10">
    <location>
        <begin position="305"/>
        <end position="334"/>
    </location>
</feature>
<feature type="repeat" description="ANK 11">
    <location>
        <begin position="338"/>
        <end position="367"/>
    </location>
</feature>
<feature type="repeat" description="ANK 12">
    <location>
        <begin position="371"/>
        <end position="400"/>
    </location>
</feature>
<feature type="repeat" description="ANK 13">
    <location>
        <begin position="422"/>
        <end position="451"/>
    </location>
</feature>
<feature type="repeat" description="ANK 14">
    <location>
        <begin position="455"/>
        <end position="484"/>
    </location>
</feature>
<feature type="repeat" description="ANK 15">
    <location>
        <begin position="488"/>
        <end position="539"/>
    </location>
</feature>
<feature type="repeat" description="ANK 16">
    <location>
        <begin position="543"/>
        <end position="573"/>
    </location>
</feature>
<feature type="repeat" description="ANK 17">
    <location>
        <begin position="578"/>
        <end position="607"/>
    </location>
</feature>
<feature type="repeat" description="ANK 18">
    <location>
        <begin position="611"/>
        <end position="640"/>
    </location>
</feature>
<feature type="repeat" description="ANK 19">
    <location>
        <begin position="645"/>
        <end position="674"/>
    </location>
</feature>
<feature type="repeat" description="ANK 20">
    <location>
        <begin position="681"/>
        <end position="710"/>
    </location>
</feature>
<feature type="repeat" description="ANK 21">
    <location>
        <begin position="714"/>
        <end position="743"/>
    </location>
</feature>
<feature type="repeat" description="ANK 22">
    <location>
        <begin position="747"/>
        <end position="776"/>
    </location>
</feature>
<feature type="repeat" description="ANK 23">
    <location>
        <begin position="784"/>
        <end position="814"/>
    </location>
</feature>
<feature type="repeat" description="ANK 24">
    <location>
        <begin position="816"/>
        <end position="845"/>
    </location>
</feature>
<feature type="repeat" description="ANK 25">
    <location>
        <begin position="852"/>
        <end position="881"/>
    </location>
</feature>
<feature type="repeat" description="ANK 26">
    <location>
        <begin position="885"/>
        <end position="915"/>
    </location>
</feature>
<feature type="repeat" description="ANK 27">
    <location>
        <begin position="919"/>
        <end position="951"/>
    </location>
</feature>
<feature type="repeat" description="ANK 28">
    <location>
        <begin position="955"/>
        <end position="984"/>
    </location>
</feature>
<protein>
    <recommendedName>
        <fullName>Serine/threonine-protein phosphatase 6 regulatory ankyrin repeat subunit C</fullName>
        <shortName>PP6-ARS-C</shortName>
        <shortName>Serine/threonine-protein phosphatase 6 regulatory subunit ARS-C</shortName>
    </recommendedName>
</protein>
<proteinExistence type="evidence at transcript level"/>
<dbReference type="EMBL" id="BC095664">
    <property type="protein sequence ID" value="AAH95664.1"/>
    <property type="molecule type" value="mRNA"/>
</dbReference>
<dbReference type="RefSeq" id="NP_001018164.1">
    <property type="nucleotide sequence ID" value="NM_001018154.1"/>
</dbReference>
<dbReference type="SMR" id="Q502K3"/>
<dbReference type="BioGRID" id="95949">
    <property type="interactions" value="1"/>
</dbReference>
<dbReference type="FunCoup" id="Q502K3">
    <property type="interactions" value="739"/>
</dbReference>
<dbReference type="STRING" id="7955.ENSDARP00000030948"/>
<dbReference type="PaxDb" id="7955-ENSDARP00000030948"/>
<dbReference type="GeneID" id="553206"/>
<dbReference type="KEGG" id="dre:553206"/>
<dbReference type="AGR" id="ZFIN:ZDB-GENE-050522-247"/>
<dbReference type="CTD" id="553206"/>
<dbReference type="ZFIN" id="ZDB-GENE-050522-247">
    <property type="gene designation" value="ankrd52a"/>
</dbReference>
<dbReference type="eggNOG" id="KOG0504">
    <property type="taxonomic scope" value="Eukaryota"/>
</dbReference>
<dbReference type="InParanoid" id="Q502K3"/>
<dbReference type="OrthoDB" id="7464126at2759"/>
<dbReference type="PhylomeDB" id="Q502K3"/>
<dbReference type="PRO" id="PR:Q502K3"/>
<dbReference type="Proteomes" id="UP000000437">
    <property type="component" value="Alternate scaffold 23"/>
</dbReference>
<dbReference type="Proteomes" id="UP000000437">
    <property type="component" value="Chromosome 23"/>
</dbReference>
<dbReference type="Gene3D" id="1.25.40.20">
    <property type="entry name" value="Ankyrin repeat-containing domain"/>
    <property type="match status" value="10"/>
</dbReference>
<dbReference type="InterPro" id="IPR002110">
    <property type="entry name" value="Ankyrin_rpt"/>
</dbReference>
<dbReference type="InterPro" id="IPR036770">
    <property type="entry name" value="Ankyrin_rpt-contain_sf"/>
</dbReference>
<dbReference type="PANTHER" id="PTHR24198">
    <property type="entry name" value="ANKYRIN REPEAT AND PROTEIN KINASE DOMAIN-CONTAINING PROTEIN"/>
    <property type="match status" value="1"/>
</dbReference>
<dbReference type="PANTHER" id="PTHR24198:SF192">
    <property type="entry name" value="SERINE_THREONINE-PROTEIN PHOSPHATASE 6 REGULATORY ANKYRIN REPEAT SUBUNIT A"/>
    <property type="match status" value="1"/>
</dbReference>
<dbReference type="Pfam" id="PF00023">
    <property type="entry name" value="Ank"/>
    <property type="match status" value="4"/>
</dbReference>
<dbReference type="Pfam" id="PF12796">
    <property type="entry name" value="Ank_2"/>
    <property type="match status" value="8"/>
</dbReference>
<dbReference type="Pfam" id="PF13857">
    <property type="entry name" value="Ank_5"/>
    <property type="match status" value="1"/>
</dbReference>
<dbReference type="PRINTS" id="PR01415">
    <property type="entry name" value="ANKYRIN"/>
</dbReference>
<dbReference type="SMART" id="SM00248">
    <property type="entry name" value="ANK"/>
    <property type="match status" value="29"/>
</dbReference>
<dbReference type="SUPFAM" id="SSF48403">
    <property type="entry name" value="Ankyrin repeat"/>
    <property type="match status" value="3"/>
</dbReference>
<dbReference type="PROSITE" id="PS50297">
    <property type="entry name" value="ANK_REP_REGION"/>
    <property type="match status" value="1"/>
</dbReference>
<dbReference type="PROSITE" id="PS50088">
    <property type="entry name" value="ANK_REPEAT"/>
    <property type="match status" value="21"/>
</dbReference>
<comment type="function">
    <text evidence="1">Putative regulatory subunit of protein phosphatase 6 (PP6) that may be involved in the recognition of phosphoprotein substrates.</text>
</comment>
<comment type="subunit">
    <text evidence="1">Protein phosphatase 6 (PP6) holoenzyme is proposed to be a heterotrimeric complex formed by the catalytic subunit, a SAPS domain-containing subunit (PP6R) and an ankyrin repeat-domain containing regulatory subunit (ARS).</text>
</comment>
<organism>
    <name type="scientific">Danio rerio</name>
    <name type="common">Zebrafish</name>
    <name type="synonym">Brachydanio rerio</name>
    <dbReference type="NCBI Taxonomy" id="7955"/>
    <lineage>
        <taxon>Eukaryota</taxon>
        <taxon>Metazoa</taxon>
        <taxon>Chordata</taxon>
        <taxon>Craniata</taxon>
        <taxon>Vertebrata</taxon>
        <taxon>Euteleostomi</taxon>
        <taxon>Actinopterygii</taxon>
        <taxon>Neopterygii</taxon>
        <taxon>Teleostei</taxon>
        <taxon>Ostariophysi</taxon>
        <taxon>Cypriniformes</taxon>
        <taxon>Danionidae</taxon>
        <taxon>Danioninae</taxon>
        <taxon>Danio</taxon>
    </lineage>
</organism>
<sequence>MGVLNISDQPPLVQAIFNRNADEVKLFLHKKDEVNALDQERRTPLHAAAWLGDVHIMDLLISAGANVNAKDHVWLTPLHRAAASRNERAVGLLLRKGADVTARDKYWQTPLHIAAANRATRCVETLLPHVSSLNMADRTGRAPLHHAAQSGYQEMVKLLLNKGANLSASDKKDRQPIHWAAYLGHLEVVKLLVSQGSDKSCKDKRGYTPLHAAAASGHVDVVKYLLRNGAEIDEPNAFGNTALHVACYTGQEAVANELVNRGANVNQPNHRGYTPLHLAAVSTNGALCLELLVNNGADVNMQSKEGKSPLHMAAIHGRFTRSQILIQNGGEIDCVDRYGNTPLHVAAKYGHELLISTLMTNGADTARQGIHGMFPLHLAVLYGSSDCCRKLLSSGQLYSIVLSMSKEHVLSAGFDINTPDNFGRTCLHAAASGGNIECLNLLLSSGADMNKKDKFGRTPLHYAAANGRYQCVVVLVGAGAEVNERDRSGCTPLHYSAASTAFCRTDRPHASTHQNQEDGEKESFLCVEHLLDNGADPCLCNTKGYSAVHYAAAHGNKQNLELLLEMCFNTLGDKESNGSISPLHLAVESGHWECVTVLIESGVCVDVCDPVGRSVLYLASQRGHSRCVELLLSQSASCLLAEHRSKWGPLHVAAANGHSECLRMLLCSEGGADLVNVTDAEGQTPLMLAVLGGHTDCVHLLLERGACPDMKDRRGRTALHRGAVMGREDCLTALLSHNVSVLSRDFQGRSALHLAASCGHADILSNLLSAADHSQPQDPLTDRHGYTPAHWAAYHGHEDCLEVLLELKPCSIQEGNPFTPLHCALINGHSGSAELLLESSVCNSLVNIRDAKGRTPLHAAAVAEDVAGLQLVLRQGADIDAVDHSGRSALMVAADYGQSGAVALLLHRAKADLSLLDVNKNTALHLACSKAHEMCAMLILKEIHNPILINATNSMLQMPLHIAARNGLATVVQALLNRGATVLAVDEEGHTPALACASNKAVADCLALILSTMKPSSSTASSSSPSSPSLNLLKHCGITAACPPLPNGGLRHGYGKDRHGATIGLDGCLTE</sequence>
<evidence type="ECO:0000250" key="1"/>